<proteinExistence type="evidence at protein level"/>
<organism>
    <name type="scientific">Oryza sativa subsp. japonica</name>
    <name type="common">Rice</name>
    <dbReference type="NCBI Taxonomy" id="39947"/>
    <lineage>
        <taxon>Eukaryota</taxon>
        <taxon>Viridiplantae</taxon>
        <taxon>Streptophyta</taxon>
        <taxon>Embryophyta</taxon>
        <taxon>Tracheophyta</taxon>
        <taxon>Spermatophyta</taxon>
        <taxon>Magnoliopsida</taxon>
        <taxon>Liliopsida</taxon>
        <taxon>Poales</taxon>
        <taxon>Poaceae</taxon>
        <taxon>BOP clade</taxon>
        <taxon>Oryzoideae</taxon>
        <taxon>Oryzeae</taxon>
        <taxon>Oryzinae</taxon>
        <taxon>Oryza</taxon>
        <taxon>Oryza sativa</taxon>
    </lineage>
</organism>
<protein>
    <recommendedName>
        <fullName evidence="10">Probable L-ascorbate peroxidase 8, chloroplastic</fullName>
        <ecNumber evidence="10">1.11.1.11</ecNumber>
    </recommendedName>
    <alternativeName>
        <fullName evidence="9">OsAPx8</fullName>
    </alternativeName>
</protein>
<feature type="transit peptide" description="Chloroplast" evidence="2">
    <location>
        <begin position="1"/>
        <end position="76"/>
    </location>
</feature>
<feature type="chain" id="PRO_0000042658" description="Probable L-ascorbate peroxidase 8, chloroplastic">
    <location>
        <begin position="77"/>
        <end position="478"/>
    </location>
</feature>
<feature type="transmembrane region" description="Helical" evidence="2">
    <location>
        <begin position="458"/>
        <end position="478"/>
    </location>
</feature>
<feature type="region of interest" description="Disordered" evidence="4">
    <location>
        <begin position="1"/>
        <end position="31"/>
    </location>
</feature>
<feature type="region of interest" description="Disordered" evidence="4">
    <location>
        <begin position="44"/>
        <end position="66"/>
    </location>
</feature>
<feature type="region of interest" description="Disordered" evidence="4">
    <location>
        <begin position="245"/>
        <end position="276"/>
    </location>
</feature>
<feature type="region of interest" description="Disordered" evidence="4">
    <location>
        <begin position="346"/>
        <end position="417"/>
    </location>
</feature>
<feature type="compositionally biased region" description="Low complexity" evidence="4">
    <location>
        <begin position="1"/>
        <end position="13"/>
    </location>
</feature>
<feature type="compositionally biased region" description="Pro residues" evidence="4">
    <location>
        <begin position="14"/>
        <end position="26"/>
    </location>
</feature>
<feature type="compositionally biased region" description="Basic and acidic residues" evidence="4">
    <location>
        <begin position="251"/>
        <end position="270"/>
    </location>
</feature>
<feature type="compositionally biased region" description="Pro residues" evidence="4">
    <location>
        <begin position="369"/>
        <end position="381"/>
    </location>
</feature>
<feature type="compositionally biased region" description="Low complexity" evidence="4">
    <location>
        <begin position="394"/>
        <end position="406"/>
    </location>
</feature>
<feature type="active site" description="Proton acceptor" evidence="3">
    <location>
        <position position="117"/>
    </location>
</feature>
<feature type="binding site" description="axial binding residue" evidence="3">
    <location>
        <position position="246"/>
    </location>
    <ligand>
        <name>heme b</name>
        <dbReference type="ChEBI" id="CHEBI:60344"/>
    </ligand>
    <ligandPart>
        <name>Fe</name>
        <dbReference type="ChEBI" id="CHEBI:18248"/>
    </ligandPart>
</feature>
<feature type="binding site" evidence="1">
    <location>
        <position position="247"/>
    </location>
    <ligand>
        <name>K(+)</name>
        <dbReference type="ChEBI" id="CHEBI:29103"/>
    </ligand>
</feature>
<feature type="binding site" evidence="1">
    <location>
        <position position="279"/>
    </location>
    <ligand>
        <name>K(+)</name>
        <dbReference type="ChEBI" id="CHEBI:29103"/>
    </ligand>
</feature>
<feature type="binding site" evidence="1">
    <location>
        <position position="286"/>
    </location>
    <ligand>
        <name>K(+)</name>
        <dbReference type="ChEBI" id="CHEBI:29103"/>
    </ligand>
</feature>
<feature type="site" description="Transition state stabilizer" evidence="3">
    <location>
        <position position="113"/>
    </location>
</feature>
<dbReference type="EC" id="1.11.1.11" evidence="10"/>
<dbReference type="EMBL" id="AB114856">
    <property type="protein sequence ID" value="BAC79363.1"/>
    <property type="molecule type" value="mRNA"/>
</dbReference>
<dbReference type="EMBL" id="AP004876">
    <property type="protein sequence ID" value="BAD33296.1"/>
    <property type="status" value="ALT_SEQ"/>
    <property type="molecule type" value="Genomic_DNA"/>
</dbReference>
<dbReference type="EMBL" id="AP008208">
    <property type="protein sequence ID" value="BAF09025.1"/>
    <property type="molecule type" value="Genomic_DNA"/>
</dbReference>
<dbReference type="EMBL" id="AP014958">
    <property type="protein sequence ID" value="BAS79186.1"/>
    <property type="status" value="ALT_SEQ"/>
    <property type="molecule type" value="Genomic_DNA"/>
</dbReference>
<dbReference type="RefSeq" id="XP_015623105.1">
    <property type="nucleotide sequence ID" value="XM_015767619.1"/>
</dbReference>
<dbReference type="SMR" id="Q69SV0"/>
<dbReference type="FunCoup" id="Q69SV0">
    <property type="interactions" value="1250"/>
</dbReference>
<dbReference type="STRING" id="39947.Q69SV0"/>
<dbReference type="PeroxiBase" id="1872">
    <property type="entry name" value="OsAPx08"/>
</dbReference>
<dbReference type="PaxDb" id="39947-Q69SV0"/>
<dbReference type="EnsemblPlants" id="Os02t0553200-01">
    <property type="protein sequence ID" value="Os02t0553200-01"/>
    <property type="gene ID" value="Os02g0553200"/>
</dbReference>
<dbReference type="Gramene" id="Os02t0553200-01">
    <property type="protein sequence ID" value="Os02t0553200-01"/>
    <property type="gene ID" value="Os02g0553200"/>
</dbReference>
<dbReference type="KEGG" id="dosa:Os02g0553200"/>
<dbReference type="eggNOG" id="ENOG502QS7Q">
    <property type="taxonomic scope" value="Eukaryota"/>
</dbReference>
<dbReference type="HOGENOM" id="CLU_036959_2_0_1"/>
<dbReference type="InParanoid" id="Q69SV0"/>
<dbReference type="OrthoDB" id="2859658at2759"/>
<dbReference type="BRENDA" id="1.11.1.11">
    <property type="organism ID" value="4460"/>
</dbReference>
<dbReference type="Proteomes" id="UP000000763">
    <property type="component" value="Chromosome 2"/>
</dbReference>
<dbReference type="Proteomes" id="UP000059680">
    <property type="component" value="Chromosome 2"/>
</dbReference>
<dbReference type="GO" id="GO:0009535">
    <property type="term" value="C:chloroplast thylakoid membrane"/>
    <property type="evidence" value="ECO:0007669"/>
    <property type="project" value="UniProtKB-SubCell"/>
</dbReference>
<dbReference type="GO" id="GO:0020037">
    <property type="term" value="F:heme binding"/>
    <property type="evidence" value="ECO:0007669"/>
    <property type="project" value="InterPro"/>
</dbReference>
<dbReference type="GO" id="GO:0016688">
    <property type="term" value="F:L-ascorbate peroxidase activity"/>
    <property type="evidence" value="ECO:0007669"/>
    <property type="project" value="UniProtKB-EC"/>
</dbReference>
<dbReference type="GO" id="GO:0046872">
    <property type="term" value="F:metal ion binding"/>
    <property type="evidence" value="ECO:0007669"/>
    <property type="project" value="UniProtKB-KW"/>
</dbReference>
<dbReference type="GO" id="GO:0004601">
    <property type="term" value="F:peroxidase activity"/>
    <property type="evidence" value="ECO:0000318"/>
    <property type="project" value="GO_Central"/>
</dbReference>
<dbReference type="GO" id="GO:0034599">
    <property type="term" value="P:cellular response to oxidative stress"/>
    <property type="evidence" value="ECO:0000318"/>
    <property type="project" value="GO_Central"/>
</dbReference>
<dbReference type="GO" id="GO:0006952">
    <property type="term" value="P:defense response"/>
    <property type="evidence" value="ECO:0007669"/>
    <property type="project" value="UniProtKB-KW"/>
</dbReference>
<dbReference type="GO" id="GO:0042744">
    <property type="term" value="P:hydrogen peroxide catabolic process"/>
    <property type="evidence" value="ECO:0000318"/>
    <property type="project" value="GO_Central"/>
</dbReference>
<dbReference type="GO" id="GO:0000302">
    <property type="term" value="P:response to reactive oxygen species"/>
    <property type="evidence" value="ECO:0000318"/>
    <property type="project" value="GO_Central"/>
</dbReference>
<dbReference type="CDD" id="cd00691">
    <property type="entry name" value="ascorbate_peroxidase"/>
    <property type="match status" value="1"/>
</dbReference>
<dbReference type="FunFam" id="1.10.520.10:FF:000007">
    <property type="entry name" value="L-ascorbate peroxidase S chloroplastic/mitochondrial"/>
    <property type="match status" value="1"/>
</dbReference>
<dbReference type="FunFam" id="1.10.420.10:FF:000005">
    <property type="entry name" value="L-ascorbate peroxidase T, chloroplastic"/>
    <property type="match status" value="1"/>
</dbReference>
<dbReference type="Gene3D" id="1.10.520.10">
    <property type="match status" value="1"/>
</dbReference>
<dbReference type="Gene3D" id="1.10.420.10">
    <property type="entry name" value="Peroxidase, domain 2"/>
    <property type="match status" value="1"/>
</dbReference>
<dbReference type="InterPro" id="IPR044831">
    <property type="entry name" value="Ccp1-like"/>
</dbReference>
<dbReference type="InterPro" id="IPR002016">
    <property type="entry name" value="Haem_peroxidase"/>
</dbReference>
<dbReference type="InterPro" id="IPR010255">
    <property type="entry name" value="Haem_peroxidase_sf"/>
</dbReference>
<dbReference type="InterPro" id="IPR002207">
    <property type="entry name" value="Peroxidase_I"/>
</dbReference>
<dbReference type="InterPro" id="IPR019793">
    <property type="entry name" value="Peroxidases_heam-ligand_BS"/>
</dbReference>
<dbReference type="PANTHER" id="PTHR31356:SF11">
    <property type="entry name" value="L-ASCORBATE PEROXIDASE 8, CHLOROPLASTIC-RELATED"/>
    <property type="match status" value="1"/>
</dbReference>
<dbReference type="PANTHER" id="PTHR31356">
    <property type="entry name" value="THYLAKOID LUMENAL 29 KDA PROTEIN, CHLOROPLASTIC-RELATED"/>
    <property type="match status" value="1"/>
</dbReference>
<dbReference type="Pfam" id="PF00141">
    <property type="entry name" value="peroxidase"/>
    <property type="match status" value="1"/>
</dbReference>
<dbReference type="PRINTS" id="PR00459">
    <property type="entry name" value="ASPEROXIDASE"/>
</dbReference>
<dbReference type="PRINTS" id="PR00458">
    <property type="entry name" value="PEROXIDASE"/>
</dbReference>
<dbReference type="SUPFAM" id="SSF48113">
    <property type="entry name" value="Heme-dependent peroxidases"/>
    <property type="match status" value="1"/>
</dbReference>
<dbReference type="PROSITE" id="PS00435">
    <property type="entry name" value="PEROXIDASE_1"/>
    <property type="match status" value="1"/>
</dbReference>
<dbReference type="PROSITE" id="PS50873">
    <property type="entry name" value="PEROXIDASE_4"/>
    <property type="match status" value="1"/>
</dbReference>
<keyword id="KW-0106">Calcium</keyword>
<keyword id="KW-0150">Chloroplast</keyword>
<keyword id="KW-0349">Heme</keyword>
<keyword id="KW-0376">Hydrogen peroxide</keyword>
<keyword id="KW-0408">Iron</keyword>
<keyword id="KW-0472">Membrane</keyword>
<keyword id="KW-0479">Metal-binding</keyword>
<keyword id="KW-0560">Oxidoreductase</keyword>
<keyword id="KW-0575">Peroxidase</keyword>
<keyword id="KW-0611">Plant defense</keyword>
<keyword id="KW-0934">Plastid</keyword>
<keyword id="KW-0630">Potassium</keyword>
<keyword id="KW-1185">Reference proteome</keyword>
<keyword id="KW-0346">Stress response</keyword>
<keyword id="KW-0793">Thylakoid</keyword>
<keyword id="KW-0809">Transit peptide</keyword>
<keyword id="KW-0812">Transmembrane</keyword>
<keyword id="KW-1133">Transmembrane helix</keyword>
<gene>
    <name evidence="9" type="primary">APX8</name>
    <name evidence="13" type="ordered locus">Os02g0553200</name>
    <name evidence="10" type="ordered locus">LOC_Os02g34810</name>
    <name evidence="12" type="ORF">P0470G10.5</name>
</gene>
<reference key="1">
    <citation type="submission" date="2003-07" db="EMBL/GenBank/DDBJ databases">
        <title>The expression of rice chloroplastic ascorbate peroxidase genes during greening.</title>
        <authorList>
            <person name="Morita S."/>
            <person name="Kotani T."/>
            <person name="Kaminaka H."/>
            <person name="Masumura T."/>
            <person name="Tanaka K."/>
        </authorList>
    </citation>
    <scope>NUCLEOTIDE SEQUENCE [MRNA]</scope>
    <source>
        <strain>cv. Nipponbare</strain>
    </source>
</reference>
<reference key="2">
    <citation type="journal article" date="2005" name="Nature">
        <title>The map-based sequence of the rice genome.</title>
        <authorList>
            <consortium name="International rice genome sequencing project (IRGSP)"/>
        </authorList>
    </citation>
    <scope>NUCLEOTIDE SEQUENCE [LARGE SCALE GENOMIC DNA]</scope>
    <source>
        <strain>cv. Nipponbare</strain>
    </source>
</reference>
<reference key="3">
    <citation type="journal article" date="2013" name="Rice">
        <title>Improvement of the Oryza sativa Nipponbare reference genome using next generation sequence and optical map data.</title>
        <authorList>
            <person name="Kawahara Y."/>
            <person name="de la Bastide M."/>
            <person name="Hamilton J.P."/>
            <person name="Kanamori H."/>
            <person name="McCombie W.R."/>
            <person name="Ouyang S."/>
            <person name="Schwartz D.C."/>
            <person name="Tanaka T."/>
            <person name="Wu J."/>
            <person name="Zhou S."/>
            <person name="Childs K.L."/>
            <person name="Davidson R.M."/>
            <person name="Lin H."/>
            <person name="Quesada-Ocampo L."/>
            <person name="Vaillancourt B."/>
            <person name="Sakai H."/>
            <person name="Lee S.S."/>
            <person name="Kim J."/>
            <person name="Numa H."/>
            <person name="Itoh T."/>
            <person name="Buell C.R."/>
            <person name="Matsumoto T."/>
        </authorList>
    </citation>
    <scope>GENOME REANNOTATION</scope>
    <source>
        <strain>cv. Nipponbare</strain>
    </source>
</reference>
<reference key="4">
    <citation type="journal article" date="2004" name="J. Mol. Evol.">
        <title>Analysis of the molecular evolutionary history of the ascorbate peroxidase gene family: inferences from the rice genome.</title>
        <authorList>
            <person name="Teixeira F.K."/>
            <person name="Menezes-Benavente L."/>
            <person name="Margis R."/>
            <person name="Margis-Pinheiro M."/>
        </authorList>
    </citation>
    <scope>NOMENCLATURE</scope>
</reference>
<reference key="5">
    <citation type="journal article" date="2006" name="Planta">
        <title>Rice ascorbate peroxidase gene family encodes functionally diverse isoforms localized in different subcellular compartments.</title>
        <authorList>
            <person name="Teixeira F.K."/>
            <person name="Menezes-Benavente L."/>
            <person name="Galvao V.C."/>
            <person name="Margis R."/>
            <person name="Margis-Pinheiro M."/>
        </authorList>
    </citation>
    <scope>TISSUE SPECIFICITY</scope>
    <scope>INDUCTION</scope>
</reference>
<reference key="6">
    <citation type="journal article" date="2007" name="J. Exp. Bot.">
        <title>Expression of ASCORBATE PEROXIDASE 8 in roots of rice (Oryza sativa L.) seedlings in response to NaCl.</title>
        <authorList>
            <person name="Hong C.Y."/>
            <person name="Hsu Y.T."/>
            <person name="Tsai Y.C."/>
            <person name="Kao C.H."/>
        </authorList>
    </citation>
    <scope>INDUCTION</scope>
</reference>
<reference key="7">
    <citation type="journal article" date="2015" name="J. Plant Physiol.">
        <title>Transcriptional profile of genes involved in ascorbate glutathione cycle in senescing leaves for an early senescence leaf (esl) rice mutant.</title>
        <authorList>
            <person name="Li Z."/>
            <person name="Su D."/>
            <person name="Lei B."/>
            <person name="Wang F."/>
            <person name="Geng W."/>
            <person name="Pan G."/>
            <person name="Cheng F."/>
        </authorList>
    </citation>
    <scope>SUBCELLULAR LOCATION</scope>
    <scope>INDUCTION</scope>
</reference>
<reference key="8">
    <citation type="journal article" date="2016" name="Sci. Rep.">
        <title>The rice thylakoid membrane-bound ascorbate peroxidase OsAPX8 functions in tolerance to bacterial blight.</title>
        <authorList>
            <person name="Jiang G."/>
            <person name="Yin D."/>
            <person name="Zhao J."/>
            <person name="Chen H."/>
            <person name="Guo L."/>
            <person name="Zhu L."/>
            <person name="Zhai W."/>
        </authorList>
    </citation>
    <scope>FUNCTION</scope>
    <scope>INTERACTION WITH SWEET11/OS8N3</scope>
    <scope>SUBCELLULAR LOCATION</scope>
    <scope>TISSUE SPECIFICITY</scope>
    <scope>INDUCTION BY XANTHOMONAS ORYZAE</scope>
    <source>
        <strain>cv. Taipei 309</strain>
    </source>
</reference>
<sequence length="478" mass="51188">MAERIAASLLPAASPSPAPSPPPPRPRVSAAAAASFPCCSTSAGGLRLRSRPSRFPQKAATTRSGRAGAGARAVVRCMAAAAVAASDAAQLKSAREDIREILKTTYCHPIMVRLGWHDSGTYDKNIEEWPQRGGADGSLRFDAELSHGANAGLINALKLIQPIKDKYPGITYADLFQLASATAIEEAGGPKIPMKYGRVDVTAAEQCPPEGRLPDAGPRVPADHLREVFYRMGLDDKEIVALSGAHTLGRSRPDRSGWGKPETKYTKDGPGEPGGQSWTVEWLKFDNSYFKDIKEQRDQDLLVLPTDAALFEDPSFKVYAEKYAEDQEAFFKDYAEAHAKLSDLGAKFDPPEGFSLDDEPAVEEKDPEPAPAPAAAPPPPPVEEKKEAEPTPVPVTVGAAVASSPADDNNGAAPQPEPFVAAKYSYGKKELSDSMKQKIRAEYEGFGGSPDKPLQSNYFLNIMLLIGGLAFLTSLLGS</sequence>
<evidence type="ECO:0000250" key="1"/>
<evidence type="ECO:0000255" key="2"/>
<evidence type="ECO:0000255" key="3">
    <source>
        <dbReference type="PROSITE-ProRule" id="PRU00297"/>
    </source>
</evidence>
<evidence type="ECO:0000256" key="4">
    <source>
        <dbReference type="SAM" id="MobiDB-lite"/>
    </source>
</evidence>
<evidence type="ECO:0000269" key="5">
    <source>
    </source>
</evidence>
<evidence type="ECO:0000269" key="6">
    <source>
    </source>
</evidence>
<evidence type="ECO:0000269" key="7">
    <source>
    </source>
</evidence>
<evidence type="ECO:0000269" key="8">
    <source>
    </source>
</evidence>
<evidence type="ECO:0000303" key="9">
    <source>
    </source>
</evidence>
<evidence type="ECO:0000305" key="10"/>
<evidence type="ECO:0000305" key="11">
    <source>
    </source>
</evidence>
<evidence type="ECO:0000312" key="12">
    <source>
        <dbReference type="EMBL" id="BAD33296.1"/>
    </source>
</evidence>
<evidence type="ECO:0000312" key="13">
    <source>
        <dbReference type="EMBL" id="BAS79186.1"/>
    </source>
</evidence>
<comment type="function">
    <text evidence="8">Involved in defense response and tolerance to the bacterial pathogen Xanthomonas oryzae pv. oryzae (Xoo). Plays an important role in hydrogen peroxide removal during infection by Xoo. Involved in response to abiotic stress. Plays a role in hydrogen peroxide removal durings salt stress.</text>
</comment>
<comment type="catalytic activity">
    <reaction evidence="10">
        <text>L-ascorbate + H2O2 = L-dehydroascorbate + 2 H2O</text>
        <dbReference type="Rhea" id="RHEA:22996"/>
        <dbReference type="ChEBI" id="CHEBI:15377"/>
        <dbReference type="ChEBI" id="CHEBI:16240"/>
        <dbReference type="ChEBI" id="CHEBI:38290"/>
        <dbReference type="ChEBI" id="CHEBI:58539"/>
        <dbReference type="EC" id="1.11.1.11"/>
    </reaction>
</comment>
<comment type="cofactor">
    <cofactor evidence="1">
        <name>heme b</name>
        <dbReference type="ChEBI" id="CHEBI:60344"/>
    </cofactor>
    <text evidence="1">Binds 1 heme b (iron(II)-protoporphyrin IX) group.</text>
</comment>
<comment type="subunit">
    <text evidence="8">Interacts with SWEET11/OS8N3.</text>
</comment>
<comment type="subcellular location">
    <subcellularLocation>
        <location evidence="8 11">Plastid</location>
        <location evidence="8 11">Chloroplast thylakoid membrane</location>
        <topology evidence="2">Single-pass membrane protein</topology>
    </subcellularLocation>
</comment>
<comment type="tissue specificity">
    <text evidence="5 8">Expressed in roots, leaves, stems and flowers (PubMed:16397796). Expressed in leaves, shoots and panicles. Expressed at low levels in roots (PubMed:27185545).</text>
</comment>
<comment type="induction">
    <text evidence="5 6 7 8">Induced by salt stress, abscisic acid (ABA), sodium nitrate and hydrogen peroxide in roots (PubMed:17916638). Induced by infection with the bacterial pathogen Xanthomonas oryzae pv. oryzae (Xoo) (PubMed:27185545). Down-regulated by salt stress in leaves (PubMed:16397796). Down-regulated by hydrogen peroxide in leaves (PubMed:25546583).</text>
</comment>
<comment type="miscellaneous">
    <text evidence="1 8">Binds one cation per subunit; probably K(+), but might also be Ca(2+) (By similarity). Plants over-expressing APX8 exhibit increased tolerance to the bacterial pathogen Xanthomonas oryzae pv. oryzae (Xoo). Plants silencing APX8 show increased sensitivity to Xoo (PubMed:27185545).</text>
</comment>
<comment type="similarity">
    <text evidence="10">Belongs to the peroxidase family. Ascorbate peroxidase subfamily.</text>
</comment>
<comment type="sequence caution" evidence="10">
    <conflict type="erroneous gene model prediction">
        <sequence resource="EMBL-CDS" id="BAD33296"/>
    </conflict>
</comment>
<comment type="sequence caution" evidence="10">
    <conflict type="erroneous gene model prediction">
        <sequence resource="EMBL-CDS" id="BAS79186"/>
    </conflict>
</comment>
<accession>Q69SV0</accession>
<accession>A0A0P0VKA2</accession>
<accession>Q0E0G3</accession>
<accession>Q7XJ01</accession>
<name>APX8_ORYSJ</name>